<feature type="propeptide" id="PRO_0000397380" description="Removed in mature form; by autocatalysis" evidence="1">
    <location>
        <position position="1"/>
    </location>
</feature>
<feature type="chain" id="PRO_0000397381" description="Proteasome subunit beta">
    <location>
        <begin position="2"/>
        <end position="196"/>
    </location>
</feature>
<feature type="active site" description="Nucleophile" evidence="1">
    <location>
        <position position="2"/>
    </location>
</feature>
<accession>Q74MP5</accession>
<reference key="1">
    <citation type="journal article" date="2003" name="Proc. Natl. Acad. Sci. U.S.A.">
        <title>The genome of Nanoarchaeum equitans: insights into early archaeal evolution and derived parasitism.</title>
        <authorList>
            <person name="Waters E."/>
            <person name="Hohn M.J."/>
            <person name="Ahel I."/>
            <person name="Graham D.E."/>
            <person name="Adams M.D."/>
            <person name="Barnstead M."/>
            <person name="Beeson K.Y."/>
            <person name="Bibbs L."/>
            <person name="Bolanos R."/>
            <person name="Keller M."/>
            <person name="Kretz K."/>
            <person name="Lin X."/>
            <person name="Mathur E."/>
            <person name="Ni J."/>
            <person name="Podar M."/>
            <person name="Richardson T."/>
            <person name="Sutton G.G."/>
            <person name="Simon M."/>
            <person name="Soell D."/>
            <person name="Stetter K.O."/>
            <person name="Short J.M."/>
            <person name="Noorderwier M."/>
        </authorList>
    </citation>
    <scope>NUCLEOTIDE SEQUENCE [LARGE SCALE GENOMIC DNA]</scope>
    <source>
        <strain>Kin4-M</strain>
    </source>
</reference>
<proteinExistence type="inferred from homology"/>
<sequence length="196" mass="21435">MTTIIGIKARDGVVLASDKQASMGNIVEDKRAQKIIPITDYILLAGSGTVADLQHIAKILKTELKLRELYSRRTMNVIEAANLLSHLLYQNRFYLNPLGLLIAGPINSKEFGIYSLDGIGAISEIKDYFAEGSGGVIALGTLEAEYNPDITVRDAIKLAEKALKSSIARDVFSGYGIEIYTITKKGVEKLFLEAQK</sequence>
<protein>
    <recommendedName>
        <fullName evidence="1">Proteasome subunit beta</fullName>
        <ecNumber evidence="1">3.4.25.1</ecNumber>
    </recommendedName>
    <alternativeName>
        <fullName evidence="1">20S proteasome beta subunit</fullName>
    </alternativeName>
    <alternativeName>
        <fullName evidence="1">Proteasome core protein PsmB</fullName>
    </alternativeName>
</protein>
<dbReference type="EC" id="3.4.25.1" evidence="1"/>
<dbReference type="EMBL" id="AE017199">
    <property type="protein sequence ID" value="AAR39057.1"/>
    <property type="molecule type" value="Genomic_DNA"/>
</dbReference>
<dbReference type="SMR" id="Q74MP5"/>
<dbReference type="STRING" id="228908.NEQ203"/>
<dbReference type="EnsemblBacteria" id="AAR39057">
    <property type="protein sequence ID" value="AAR39057"/>
    <property type="gene ID" value="NEQ203"/>
</dbReference>
<dbReference type="KEGG" id="neq:NEQ203"/>
<dbReference type="HOGENOM" id="CLU_035750_7_2_2"/>
<dbReference type="Proteomes" id="UP000000578">
    <property type="component" value="Chromosome"/>
</dbReference>
<dbReference type="GO" id="GO:0005737">
    <property type="term" value="C:cytoplasm"/>
    <property type="evidence" value="ECO:0007669"/>
    <property type="project" value="UniProtKB-SubCell"/>
</dbReference>
<dbReference type="GO" id="GO:0019774">
    <property type="term" value="C:proteasome core complex, beta-subunit complex"/>
    <property type="evidence" value="ECO:0007669"/>
    <property type="project" value="UniProtKB-UniRule"/>
</dbReference>
<dbReference type="GO" id="GO:0004298">
    <property type="term" value="F:threonine-type endopeptidase activity"/>
    <property type="evidence" value="ECO:0007669"/>
    <property type="project" value="UniProtKB-UniRule"/>
</dbReference>
<dbReference type="GO" id="GO:0010498">
    <property type="term" value="P:proteasomal protein catabolic process"/>
    <property type="evidence" value="ECO:0007669"/>
    <property type="project" value="UniProtKB-UniRule"/>
</dbReference>
<dbReference type="Gene3D" id="3.60.20.10">
    <property type="entry name" value="Glutamine Phosphoribosylpyrophosphate, subunit 1, domain 1"/>
    <property type="match status" value="1"/>
</dbReference>
<dbReference type="HAMAP" id="MF_02113_A">
    <property type="entry name" value="Proteasome_B_A"/>
    <property type="match status" value="1"/>
</dbReference>
<dbReference type="InterPro" id="IPR029055">
    <property type="entry name" value="Ntn_hydrolases_N"/>
</dbReference>
<dbReference type="InterPro" id="IPR019983">
    <property type="entry name" value="Pept_T1A_Psome_bsu_arc"/>
</dbReference>
<dbReference type="InterPro" id="IPR000243">
    <property type="entry name" value="Pept_T1A_subB"/>
</dbReference>
<dbReference type="InterPro" id="IPR016050">
    <property type="entry name" value="Proteasome_bsu_CS"/>
</dbReference>
<dbReference type="InterPro" id="IPR001353">
    <property type="entry name" value="Proteasome_sua/b"/>
</dbReference>
<dbReference type="InterPro" id="IPR023333">
    <property type="entry name" value="Proteasome_suB-type"/>
</dbReference>
<dbReference type="PANTHER" id="PTHR32194:SF0">
    <property type="entry name" value="ATP-DEPENDENT PROTEASE SUBUNIT HSLV"/>
    <property type="match status" value="1"/>
</dbReference>
<dbReference type="PANTHER" id="PTHR32194">
    <property type="entry name" value="METALLOPROTEASE TLDD"/>
    <property type="match status" value="1"/>
</dbReference>
<dbReference type="Pfam" id="PF00227">
    <property type="entry name" value="Proteasome"/>
    <property type="match status" value="1"/>
</dbReference>
<dbReference type="PRINTS" id="PR00141">
    <property type="entry name" value="PROTEASOME"/>
</dbReference>
<dbReference type="SUPFAM" id="SSF56235">
    <property type="entry name" value="N-terminal nucleophile aminohydrolases (Ntn hydrolases)"/>
    <property type="match status" value="1"/>
</dbReference>
<dbReference type="PROSITE" id="PS00854">
    <property type="entry name" value="PROTEASOME_BETA_1"/>
    <property type="match status" value="1"/>
</dbReference>
<dbReference type="PROSITE" id="PS51476">
    <property type="entry name" value="PROTEASOME_BETA_2"/>
    <property type="match status" value="1"/>
</dbReference>
<organism>
    <name type="scientific">Nanoarchaeum equitans (strain Kin4-M)</name>
    <dbReference type="NCBI Taxonomy" id="228908"/>
    <lineage>
        <taxon>Archaea</taxon>
        <taxon>Nanobdellota</taxon>
        <taxon>Candidatus Nanoarchaeia</taxon>
        <taxon>Nanoarchaeales</taxon>
        <taxon>Nanoarchaeaceae</taxon>
        <taxon>Nanoarchaeum</taxon>
    </lineage>
</organism>
<name>PSB_NANEQ</name>
<gene>
    <name evidence="1" type="primary">psmB</name>
    <name type="ordered locus">NEQ203</name>
</gene>
<comment type="function">
    <text evidence="1">Component of the proteasome core, a large protease complex with broad specificity involved in protein degradation.</text>
</comment>
<comment type="catalytic activity">
    <reaction evidence="1">
        <text>Cleavage of peptide bonds with very broad specificity.</text>
        <dbReference type="EC" id="3.4.25.1"/>
    </reaction>
</comment>
<comment type="activity regulation">
    <text evidence="1">The formation of the proteasomal ATPase PAN-20S proteasome complex, via the docking of the C-termini of PAN into the intersubunit pockets in the alpha-rings, triggers opening of the gate for substrate entry. Interconversion between the open-gate and close-gate conformations leads to a dynamic regulation of the 20S proteasome proteolysis activity.</text>
</comment>
<comment type="subunit">
    <text evidence="1">The 20S proteasome core is composed of 14 alpha and 14 beta subunits that assemble into four stacked heptameric rings, resulting in a barrel-shaped structure. The two inner rings, each composed of seven catalytic beta subunits, are sandwiched by two outer rings, each composed of seven alpha subunits. The catalytic chamber with the active sites is on the inside of the barrel. Has a gated structure, the ends of the cylinder being occluded by the N-termini of the alpha-subunits. Is capped at one or both ends by the proteasome regulatory ATPase, PAN.</text>
</comment>
<comment type="subcellular location">
    <subcellularLocation>
        <location evidence="1">Cytoplasm</location>
    </subcellularLocation>
</comment>
<comment type="similarity">
    <text evidence="1">Belongs to the peptidase T1B family.</text>
</comment>
<keyword id="KW-0068">Autocatalytic cleavage</keyword>
<keyword id="KW-0963">Cytoplasm</keyword>
<keyword id="KW-0378">Hydrolase</keyword>
<keyword id="KW-0645">Protease</keyword>
<keyword id="KW-0647">Proteasome</keyword>
<keyword id="KW-1185">Reference proteome</keyword>
<keyword id="KW-0888">Threonine protease</keyword>
<keyword id="KW-0865">Zymogen</keyword>
<evidence type="ECO:0000255" key="1">
    <source>
        <dbReference type="HAMAP-Rule" id="MF_02113"/>
    </source>
</evidence>